<name>MNMC_POLNA</name>
<reference key="1">
    <citation type="journal article" date="2009" name="Environ. Microbiol.">
        <title>The genome of Polaromonas naphthalenivorans strain CJ2, isolated from coal tar-contaminated sediment, reveals physiological and metabolic versatility and evolution through extensive horizontal gene transfer.</title>
        <authorList>
            <person name="Yagi J.M."/>
            <person name="Sims D."/>
            <person name="Brettin T."/>
            <person name="Bruce D."/>
            <person name="Madsen E.L."/>
        </authorList>
    </citation>
    <scope>NUCLEOTIDE SEQUENCE [LARGE SCALE GENOMIC DNA]</scope>
    <source>
        <strain>CJ2</strain>
    </source>
</reference>
<feature type="chain" id="PRO_0000348007" description="tRNA 5-methylaminomethyl-2-thiouridine biosynthesis bifunctional protein MnmC">
    <location>
        <begin position="1"/>
        <end position="637"/>
    </location>
</feature>
<feature type="region of interest" description="tRNA (mnm(5)s(2)U34)-methyltransferase">
    <location>
        <begin position="1"/>
        <end position="232"/>
    </location>
</feature>
<feature type="region of interest" description="Disordered" evidence="2">
    <location>
        <begin position="1"/>
        <end position="20"/>
    </location>
</feature>
<feature type="region of interest" description="FAD-dependent cmnm(5)s(2)U34 oxidoreductase">
    <location>
        <begin position="255"/>
        <end position="637"/>
    </location>
</feature>
<accession>A1VQ03</accession>
<organism>
    <name type="scientific">Polaromonas naphthalenivorans (strain CJ2)</name>
    <dbReference type="NCBI Taxonomy" id="365044"/>
    <lineage>
        <taxon>Bacteria</taxon>
        <taxon>Pseudomonadati</taxon>
        <taxon>Pseudomonadota</taxon>
        <taxon>Betaproteobacteria</taxon>
        <taxon>Burkholderiales</taxon>
        <taxon>Comamonadaceae</taxon>
        <taxon>Polaromonas</taxon>
    </lineage>
</organism>
<proteinExistence type="inferred from homology"/>
<evidence type="ECO:0000255" key="1">
    <source>
        <dbReference type="HAMAP-Rule" id="MF_01102"/>
    </source>
</evidence>
<evidence type="ECO:0000256" key="2">
    <source>
        <dbReference type="SAM" id="MobiDB-lite"/>
    </source>
</evidence>
<gene>
    <name evidence="1" type="primary">mnmC</name>
    <name type="ordered locus">Pnap_2424</name>
</gene>
<dbReference type="EC" id="2.1.1.61" evidence="1"/>
<dbReference type="EC" id="1.5.-.-" evidence="1"/>
<dbReference type="EMBL" id="CP000529">
    <property type="protein sequence ID" value="ABM37731.1"/>
    <property type="molecule type" value="Genomic_DNA"/>
</dbReference>
<dbReference type="RefSeq" id="WP_011801809.1">
    <property type="nucleotide sequence ID" value="NC_008781.1"/>
</dbReference>
<dbReference type="SMR" id="A1VQ03"/>
<dbReference type="STRING" id="365044.Pnap_2424"/>
<dbReference type="KEGG" id="pna:Pnap_2424"/>
<dbReference type="eggNOG" id="COG0665">
    <property type="taxonomic scope" value="Bacteria"/>
</dbReference>
<dbReference type="eggNOG" id="COG4121">
    <property type="taxonomic scope" value="Bacteria"/>
</dbReference>
<dbReference type="HOGENOM" id="CLU_022427_1_0_4"/>
<dbReference type="OrthoDB" id="9786494at2"/>
<dbReference type="Proteomes" id="UP000000644">
    <property type="component" value="Chromosome"/>
</dbReference>
<dbReference type="GO" id="GO:0005737">
    <property type="term" value="C:cytoplasm"/>
    <property type="evidence" value="ECO:0007669"/>
    <property type="project" value="UniProtKB-SubCell"/>
</dbReference>
<dbReference type="GO" id="GO:0050660">
    <property type="term" value="F:flavin adenine dinucleotide binding"/>
    <property type="evidence" value="ECO:0007669"/>
    <property type="project" value="UniProtKB-UniRule"/>
</dbReference>
<dbReference type="GO" id="GO:0016645">
    <property type="term" value="F:oxidoreductase activity, acting on the CH-NH group of donors"/>
    <property type="evidence" value="ECO:0007669"/>
    <property type="project" value="InterPro"/>
</dbReference>
<dbReference type="GO" id="GO:0004808">
    <property type="term" value="F:tRNA (5-methylaminomethyl-2-thiouridylate)(34)-methyltransferase activity"/>
    <property type="evidence" value="ECO:0007669"/>
    <property type="project" value="UniProtKB-EC"/>
</dbReference>
<dbReference type="GO" id="GO:0032259">
    <property type="term" value="P:methylation"/>
    <property type="evidence" value="ECO:0007669"/>
    <property type="project" value="UniProtKB-KW"/>
</dbReference>
<dbReference type="GO" id="GO:0002097">
    <property type="term" value="P:tRNA wobble base modification"/>
    <property type="evidence" value="ECO:0007669"/>
    <property type="project" value="UniProtKB-UniRule"/>
</dbReference>
<dbReference type="Gene3D" id="3.30.9.10">
    <property type="entry name" value="D-Amino Acid Oxidase, subunit A, domain 2"/>
    <property type="match status" value="1"/>
</dbReference>
<dbReference type="Gene3D" id="3.50.50.60">
    <property type="entry name" value="FAD/NAD(P)-binding domain"/>
    <property type="match status" value="1"/>
</dbReference>
<dbReference type="Gene3D" id="3.40.50.150">
    <property type="entry name" value="Vaccinia Virus protein VP39"/>
    <property type="match status" value="1"/>
</dbReference>
<dbReference type="HAMAP" id="MF_01102">
    <property type="entry name" value="MnmC"/>
    <property type="match status" value="1"/>
</dbReference>
<dbReference type="InterPro" id="IPR006076">
    <property type="entry name" value="FAD-dep_OxRdtase"/>
</dbReference>
<dbReference type="InterPro" id="IPR036188">
    <property type="entry name" value="FAD/NAD-bd_sf"/>
</dbReference>
<dbReference type="InterPro" id="IPR008471">
    <property type="entry name" value="MnmC-like_methylTransf"/>
</dbReference>
<dbReference type="InterPro" id="IPR029063">
    <property type="entry name" value="SAM-dependent_MTases_sf"/>
</dbReference>
<dbReference type="InterPro" id="IPR023032">
    <property type="entry name" value="tRNA_MAMT_biosynth_bifunc_MnmC"/>
</dbReference>
<dbReference type="InterPro" id="IPR047785">
    <property type="entry name" value="tRNA_MNMC2"/>
</dbReference>
<dbReference type="InterPro" id="IPR017610">
    <property type="entry name" value="tRNA_S-uridine_synth_MnmC_C"/>
</dbReference>
<dbReference type="NCBIfam" id="TIGR03197">
    <property type="entry name" value="MnmC_Cterm"/>
    <property type="match status" value="1"/>
</dbReference>
<dbReference type="NCBIfam" id="NF033855">
    <property type="entry name" value="tRNA_MNMC2"/>
    <property type="match status" value="1"/>
</dbReference>
<dbReference type="PANTHER" id="PTHR13847">
    <property type="entry name" value="SARCOSINE DEHYDROGENASE-RELATED"/>
    <property type="match status" value="1"/>
</dbReference>
<dbReference type="PANTHER" id="PTHR13847:SF283">
    <property type="entry name" value="TRNA 5-METHYLAMINOMETHYL-2-THIOURIDINE BIOSYNTHESIS BIFUNCTIONAL PROTEIN MNMC"/>
    <property type="match status" value="1"/>
</dbReference>
<dbReference type="Pfam" id="PF01266">
    <property type="entry name" value="DAO"/>
    <property type="match status" value="1"/>
</dbReference>
<dbReference type="Pfam" id="PF05430">
    <property type="entry name" value="Methyltransf_30"/>
    <property type="match status" value="1"/>
</dbReference>
<dbReference type="SUPFAM" id="SSF51905">
    <property type="entry name" value="FAD/NAD(P)-binding domain"/>
    <property type="match status" value="1"/>
</dbReference>
<keyword id="KW-0963">Cytoplasm</keyword>
<keyword id="KW-0274">FAD</keyword>
<keyword id="KW-0285">Flavoprotein</keyword>
<keyword id="KW-0489">Methyltransferase</keyword>
<keyword id="KW-0511">Multifunctional enzyme</keyword>
<keyword id="KW-0560">Oxidoreductase</keyword>
<keyword id="KW-1185">Reference proteome</keyword>
<keyword id="KW-0949">S-adenosyl-L-methionine</keyword>
<keyword id="KW-0808">Transferase</keyword>
<keyword id="KW-0819">tRNA processing</keyword>
<protein>
    <recommendedName>
        <fullName evidence="1">tRNA 5-methylaminomethyl-2-thiouridine biosynthesis bifunctional protein MnmC</fullName>
        <shortName evidence="1">tRNA mnm(5)s(2)U biosynthesis bifunctional protein</shortName>
    </recommendedName>
    <domain>
        <recommendedName>
            <fullName evidence="1">tRNA (mnm(5)s(2)U34)-methyltransferase</fullName>
            <ecNumber evidence="1">2.1.1.61</ecNumber>
        </recommendedName>
    </domain>
    <domain>
        <recommendedName>
            <fullName evidence="1">FAD-dependent cmnm(5)s(2)U34 oxidoreductase</fullName>
            <ecNumber evidence="1">1.5.-.-</ecNumber>
        </recommendedName>
    </domain>
</protein>
<comment type="function">
    <text evidence="1">Catalyzes the last two steps in the biosynthesis of 5-methylaminomethyl-2-thiouridine (mnm(5)s(2)U) at the wobble position (U34) in tRNA. Catalyzes the FAD-dependent demodification of cmnm(5)s(2)U34 to nm(5)s(2)U34, followed by the transfer of a methyl group from S-adenosyl-L-methionine to nm(5)s(2)U34, to form mnm(5)s(2)U34.</text>
</comment>
<comment type="catalytic activity">
    <reaction evidence="1">
        <text>5-aminomethyl-2-thiouridine(34) in tRNA + S-adenosyl-L-methionine = 5-methylaminomethyl-2-thiouridine(34) in tRNA + S-adenosyl-L-homocysteine + H(+)</text>
        <dbReference type="Rhea" id="RHEA:19569"/>
        <dbReference type="Rhea" id="RHEA-COMP:10195"/>
        <dbReference type="Rhea" id="RHEA-COMP:10197"/>
        <dbReference type="ChEBI" id="CHEBI:15378"/>
        <dbReference type="ChEBI" id="CHEBI:57856"/>
        <dbReference type="ChEBI" id="CHEBI:59789"/>
        <dbReference type="ChEBI" id="CHEBI:74454"/>
        <dbReference type="ChEBI" id="CHEBI:74455"/>
        <dbReference type="EC" id="2.1.1.61"/>
    </reaction>
</comment>
<comment type="cofactor">
    <cofactor evidence="1">
        <name>FAD</name>
        <dbReference type="ChEBI" id="CHEBI:57692"/>
    </cofactor>
</comment>
<comment type="subcellular location">
    <subcellularLocation>
        <location evidence="1">Cytoplasm</location>
    </subcellularLocation>
</comment>
<comment type="similarity">
    <text evidence="1">In the N-terminal section; belongs to the methyltransferase superfamily. tRNA (mnm(5)s(2)U34)-methyltransferase family.</text>
</comment>
<comment type="similarity">
    <text evidence="1">In the C-terminal section; belongs to the DAO family.</text>
</comment>
<sequence length="637" mass="68361">MSERIEWLEDGTAGGSPYSPRFGDRYRSELGGLEQAREVFLKGCGLPNAWAGQPQWCVLETGFGLGLNFLVTWAAWKADPLRPRLLHFVSTEAYPASADDVLRSALTHPELIPFAEQLKRQLWGLLPGVHRLVFEGGQVLLTLCIGDTKAMLREPSFEADSVYLDGFSPQRNPDIWDVHTFKAVARCCRRGTRIATWTIARSVRDALAQCGFVVKKVPGTPPKRDNLQGEYQPAWEVKKSRITPERKAPARCIVIGAGLAGSAVAASLARRGWQVTVLDAASTPAAGASGLPAGVLAPHVSPDDSLLSRLSRSGIRAMLQQADALLQTNIDWSPTGVLEHCVEHARQLPAAWHPGQALADAAGDWTRPATSEQLKHCGLSPETPALWHVQAGWIKPARLVQAWLSSPGVSWHGNAAVSQLVRQAGAWQALDATGNELASAELVVLAAGHGSRALSEIASPQAGRPLALQAIRGQASWGLHAPGTEQAMPAFPVNGHGSLVPRVPLEQGLAWVTGSSFERDNTSPQLRPEDEQHNFGKLKTLLPAAAQALTAQFESGQVRGWTGVRCATPSRLPALGPLENAQDVWVCSGMGSRGLTFAALCAELLAARLHGEPLPVELRQADALLPQYATRLQPSGS</sequence>